<proteinExistence type="inferred from homology"/>
<organism>
    <name type="scientific">Nitrosomonas eutropha (strain DSM 101675 / C91 / Nm57)</name>
    <dbReference type="NCBI Taxonomy" id="335283"/>
    <lineage>
        <taxon>Bacteria</taxon>
        <taxon>Pseudomonadati</taxon>
        <taxon>Pseudomonadota</taxon>
        <taxon>Betaproteobacteria</taxon>
        <taxon>Nitrosomonadales</taxon>
        <taxon>Nitrosomonadaceae</taxon>
        <taxon>Nitrosomonas</taxon>
    </lineage>
</organism>
<reference key="1">
    <citation type="journal article" date="2007" name="Environ. Microbiol.">
        <title>Whole-genome analysis of the ammonia-oxidizing bacterium, Nitrosomonas eutropha C91: implications for niche adaptation.</title>
        <authorList>
            <person name="Stein L.Y."/>
            <person name="Arp D.J."/>
            <person name="Berube P.M."/>
            <person name="Chain P.S."/>
            <person name="Hauser L."/>
            <person name="Jetten M.S."/>
            <person name="Klotz M.G."/>
            <person name="Larimer F.W."/>
            <person name="Norton J.M."/>
            <person name="Op den Camp H.J.M."/>
            <person name="Shin M."/>
            <person name="Wei X."/>
        </authorList>
    </citation>
    <scope>NUCLEOTIDE SEQUENCE [LARGE SCALE GENOMIC DNA]</scope>
    <source>
        <strain>DSM 101675 / C91 / Nm57</strain>
    </source>
</reference>
<protein>
    <recommendedName>
        <fullName evidence="1">tRNA-specific 2-thiouridylase MnmA</fullName>
        <ecNumber evidence="1">2.8.1.13</ecNumber>
    </recommendedName>
</protein>
<keyword id="KW-0067">ATP-binding</keyword>
<keyword id="KW-0963">Cytoplasm</keyword>
<keyword id="KW-1015">Disulfide bond</keyword>
<keyword id="KW-0547">Nucleotide-binding</keyword>
<keyword id="KW-0694">RNA-binding</keyword>
<keyword id="KW-0808">Transferase</keyword>
<keyword id="KW-0819">tRNA processing</keyword>
<keyword id="KW-0820">tRNA-binding</keyword>
<gene>
    <name evidence="1" type="primary">mnmA</name>
    <name type="ordered locus">Neut_2336</name>
</gene>
<accession>Q0ADM9</accession>
<comment type="function">
    <text evidence="1">Catalyzes the 2-thiolation of uridine at the wobble position (U34) of tRNA, leading to the formation of s(2)U34.</text>
</comment>
<comment type="catalytic activity">
    <reaction evidence="1">
        <text>S-sulfanyl-L-cysteinyl-[protein] + uridine(34) in tRNA + AH2 + ATP = 2-thiouridine(34) in tRNA + L-cysteinyl-[protein] + A + AMP + diphosphate + H(+)</text>
        <dbReference type="Rhea" id="RHEA:47032"/>
        <dbReference type="Rhea" id="RHEA-COMP:10131"/>
        <dbReference type="Rhea" id="RHEA-COMP:11726"/>
        <dbReference type="Rhea" id="RHEA-COMP:11727"/>
        <dbReference type="Rhea" id="RHEA-COMP:11728"/>
        <dbReference type="ChEBI" id="CHEBI:13193"/>
        <dbReference type="ChEBI" id="CHEBI:15378"/>
        <dbReference type="ChEBI" id="CHEBI:17499"/>
        <dbReference type="ChEBI" id="CHEBI:29950"/>
        <dbReference type="ChEBI" id="CHEBI:30616"/>
        <dbReference type="ChEBI" id="CHEBI:33019"/>
        <dbReference type="ChEBI" id="CHEBI:61963"/>
        <dbReference type="ChEBI" id="CHEBI:65315"/>
        <dbReference type="ChEBI" id="CHEBI:87170"/>
        <dbReference type="ChEBI" id="CHEBI:456215"/>
        <dbReference type="EC" id="2.8.1.13"/>
    </reaction>
</comment>
<comment type="subcellular location">
    <subcellularLocation>
        <location evidence="1">Cytoplasm</location>
    </subcellularLocation>
</comment>
<comment type="similarity">
    <text evidence="1">Belongs to the MnmA/TRMU family.</text>
</comment>
<sequence>MNKSRVVVGMSGGVDSSVAALLLKQQGYDVIGLFMKNWEDDDTDEYCSSRKDFLDAASVADILDIPLEAVNFSAEYRERVFSLFLAEYQAGRTPNPDVLCNSEIKFKAFLDHALALGADWIATGHYAQVHEINGQFQLLKGEDGNKDQSYFLYRLNQQQLSRTIFPIGHLYKREVRKIAHKHGLPNSTKKDSTGICFIGERPFREFLNRYLPVDPGEIHTLDGQIVGEHQGLMYYTIGQRQGLGIGGIREGSEQPWFVSGKDMQTNVLYVVQGHDHPALLRSSLTAADLSWISGAPPHQSWVYAAKIRYRQTDAPCAIIRLEHDSCQIGFAAPQWGVTPGQSVVIYESKVCLGGGIITDSV</sequence>
<evidence type="ECO:0000255" key="1">
    <source>
        <dbReference type="HAMAP-Rule" id="MF_00144"/>
    </source>
</evidence>
<dbReference type="EC" id="2.8.1.13" evidence="1"/>
<dbReference type="EMBL" id="CP000450">
    <property type="protein sequence ID" value="ABI60553.1"/>
    <property type="molecule type" value="Genomic_DNA"/>
</dbReference>
<dbReference type="RefSeq" id="WP_011635324.1">
    <property type="nucleotide sequence ID" value="NC_008344.1"/>
</dbReference>
<dbReference type="SMR" id="Q0ADM9"/>
<dbReference type="STRING" id="335283.Neut_2336"/>
<dbReference type="KEGG" id="net:Neut_2336"/>
<dbReference type="eggNOG" id="COG0482">
    <property type="taxonomic scope" value="Bacteria"/>
</dbReference>
<dbReference type="HOGENOM" id="CLU_035188_1_0_4"/>
<dbReference type="OrthoDB" id="9800696at2"/>
<dbReference type="Proteomes" id="UP000001966">
    <property type="component" value="Chromosome"/>
</dbReference>
<dbReference type="GO" id="GO:0005737">
    <property type="term" value="C:cytoplasm"/>
    <property type="evidence" value="ECO:0007669"/>
    <property type="project" value="UniProtKB-SubCell"/>
</dbReference>
<dbReference type="GO" id="GO:0005524">
    <property type="term" value="F:ATP binding"/>
    <property type="evidence" value="ECO:0007669"/>
    <property type="project" value="UniProtKB-KW"/>
</dbReference>
<dbReference type="GO" id="GO:0000049">
    <property type="term" value="F:tRNA binding"/>
    <property type="evidence" value="ECO:0007669"/>
    <property type="project" value="UniProtKB-KW"/>
</dbReference>
<dbReference type="GO" id="GO:0103016">
    <property type="term" value="F:tRNA-uridine 2-sulfurtransferase activity"/>
    <property type="evidence" value="ECO:0007669"/>
    <property type="project" value="UniProtKB-EC"/>
</dbReference>
<dbReference type="GO" id="GO:0002143">
    <property type="term" value="P:tRNA wobble position uridine thiolation"/>
    <property type="evidence" value="ECO:0007669"/>
    <property type="project" value="TreeGrafter"/>
</dbReference>
<dbReference type="CDD" id="cd01998">
    <property type="entry name" value="MnmA_TRMU-like"/>
    <property type="match status" value="1"/>
</dbReference>
<dbReference type="FunFam" id="2.30.30.280:FF:000001">
    <property type="entry name" value="tRNA-specific 2-thiouridylase MnmA"/>
    <property type="match status" value="1"/>
</dbReference>
<dbReference type="FunFam" id="2.40.30.10:FF:000023">
    <property type="entry name" value="tRNA-specific 2-thiouridylase MnmA"/>
    <property type="match status" value="1"/>
</dbReference>
<dbReference type="FunFam" id="3.40.50.620:FF:000004">
    <property type="entry name" value="tRNA-specific 2-thiouridylase MnmA"/>
    <property type="match status" value="1"/>
</dbReference>
<dbReference type="Gene3D" id="2.30.30.280">
    <property type="entry name" value="Adenine nucleotide alpha hydrolases-like domains"/>
    <property type="match status" value="1"/>
</dbReference>
<dbReference type="Gene3D" id="3.40.50.620">
    <property type="entry name" value="HUPs"/>
    <property type="match status" value="1"/>
</dbReference>
<dbReference type="Gene3D" id="2.40.30.10">
    <property type="entry name" value="Translation factors"/>
    <property type="match status" value="1"/>
</dbReference>
<dbReference type="HAMAP" id="MF_00144">
    <property type="entry name" value="tRNA_thiouridyl_MnmA"/>
    <property type="match status" value="1"/>
</dbReference>
<dbReference type="InterPro" id="IPR004506">
    <property type="entry name" value="MnmA-like"/>
</dbReference>
<dbReference type="InterPro" id="IPR046885">
    <property type="entry name" value="MnmA-like_C"/>
</dbReference>
<dbReference type="InterPro" id="IPR046884">
    <property type="entry name" value="MnmA-like_central"/>
</dbReference>
<dbReference type="InterPro" id="IPR023382">
    <property type="entry name" value="MnmA-like_central_sf"/>
</dbReference>
<dbReference type="InterPro" id="IPR014729">
    <property type="entry name" value="Rossmann-like_a/b/a_fold"/>
</dbReference>
<dbReference type="NCBIfam" id="NF001138">
    <property type="entry name" value="PRK00143.1"/>
    <property type="match status" value="1"/>
</dbReference>
<dbReference type="NCBIfam" id="TIGR00420">
    <property type="entry name" value="trmU"/>
    <property type="match status" value="1"/>
</dbReference>
<dbReference type="PANTHER" id="PTHR11933:SF5">
    <property type="entry name" value="MITOCHONDRIAL TRNA-SPECIFIC 2-THIOURIDYLASE 1"/>
    <property type="match status" value="1"/>
</dbReference>
<dbReference type="PANTHER" id="PTHR11933">
    <property type="entry name" value="TRNA 5-METHYLAMINOMETHYL-2-THIOURIDYLATE -METHYLTRANSFERASE"/>
    <property type="match status" value="1"/>
</dbReference>
<dbReference type="Pfam" id="PF03054">
    <property type="entry name" value="tRNA_Me_trans"/>
    <property type="match status" value="1"/>
</dbReference>
<dbReference type="Pfam" id="PF20258">
    <property type="entry name" value="tRNA_Me_trans_C"/>
    <property type="match status" value="1"/>
</dbReference>
<dbReference type="Pfam" id="PF20259">
    <property type="entry name" value="tRNA_Me_trans_M"/>
    <property type="match status" value="1"/>
</dbReference>
<dbReference type="SUPFAM" id="SSF52402">
    <property type="entry name" value="Adenine nucleotide alpha hydrolases-like"/>
    <property type="match status" value="1"/>
</dbReference>
<name>MNMA_NITEC</name>
<feature type="chain" id="PRO_0000349719" description="tRNA-specific 2-thiouridylase MnmA">
    <location>
        <begin position="1"/>
        <end position="361"/>
    </location>
</feature>
<feature type="region of interest" description="Interaction with target base in tRNA" evidence="1">
    <location>
        <begin position="95"/>
        <end position="97"/>
    </location>
</feature>
<feature type="region of interest" description="Interaction with tRNA" evidence="1">
    <location>
        <begin position="146"/>
        <end position="148"/>
    </location>
</feature>
<feature type="region of interest" description="Interaction with tRNA" evidence="1">
    <location>
        <begin position="308"/>
        <end position="309"/>
    </location>
</feature>
<feature type="active site" description="Nucleophile" evidence="1">
    <location>
        <position position="100"/>
    </location>
</feature>
<feature type="active site" description="Cysteine persulfide intermediate" evidence="1">
    <location>
        <position position="196"/>
    </location>
</feature>
<feature type="binding site" evidence="1">
    <location>
        <begin position="9"/>
        <end position="16"/>
    </location>
    <ligand>
        <name>ATP</name>
        <dbReference type="ChEBI" id="CHEBI:30616"/>
    </ligand>
</feature>
<feature type="binding site" evidence="1">
    <location>
        <position position="35"/>
    </location>
    <ligand>
        <name>ATP</name>
        <dbReference type="ChEBI" id="CHEBI:30616"/>
    </ligand>
</feature>
<feature type="binding site" evidence="1">
    <location>
        <position position="124"/>
    </location>
    <ligand>
        <name>ATP</name>
        <dbReference type="ChEBI" id="CHEBI:30616"/>
    </ligand>
</feature>
<feature type="site" description="Interaction with tRNA" evidence="1">
    <location>
        <position position="125"/>
    </location>
</feature>
<feature type="site" description="Interaction with tRNA" evidence="1">
    <location>
        <position position="341"/>
    </location>
</feature>
<feature type="disulfide bond" description="Alternate" evidence="1">
    <location>
        <begin position="100"/>
        <end position="196"/>
    </location>
</feature>